<reference key="1">
    <citation type="journal article" date="2007" name="Nat. Genet.">
        <title>Comparative genomic analysis of three Leishmania species that cause diverse human disease.</title>
        <authorList>
            <person name="Peacock C.S."/>
            <person name="Seeger K."/>
            <person name="Harris D."/>
            <person name="Murphy L."/>
            <person name="Ruiz J.C."/>
            <person name="Quail M.A."/>
            <person name="Peters N."/>
            <person name="Adlem E."/>
            <person name="Tivey A."/>
            <person name="Aslett M."/>
            <person name="Kerhornou A."/>
            <person name="Ivens A."/>
            <person name="Fraser A."/>
            <person name="Rajandream M.-A."/>
            <person name="Carver T."/>
            <person name="Norbertczak H."/>
            <person name="Chillingworth T."/>
            <person name="Hance Z."/>
            <person name="Jagels K."/>
            <person name="Moule S."/>
            <person name="Ormond D."/>
            <person name="Rutter S."/>
            <person name="Sqaures R."/>
            <person name="Whitehead S."/>
            <person name="Rabbinowitsch E."/>
            <person name="Arrowsmith C."/>
            <person name="White B."/>
            <person name="Thurston S."/>
            <person name="Bringaud F."/>
            <person name="Baldauf S.L."/>
            <person name="Faulconbridge A."/>
            <person name="Jeffares D."/>
            <person name="Depledge D.P."/>
            <person name="Oyola S.O."/>
            <person name="Hilley J.D."/>
            <person name="Brito L.O."/>
            <person name="Tosi L.R.O."/>
            <person name="Barrell B."/>
            <person name="Cruz A.K."/>
            <person name="Mottram J.C."/>
            <person name="Smith D.F."/>
            <person name="Berriman M."/>
        </authorList>
    </citation>
    <scope>NUCLEOTIDE SEQUENCE [LARGE SCALE GENOMIC DNA]</scope>
    <source>
        <strain>JPCM5</strain>
    </source>
</reference>
<accession>A4I1H7</accession>
<feature type="chain" id="PRO_0000383763" description="Structure-specific endonuclease subunit SLX1 homolog">
    <location>
        <begin position="1"/>
        <end position="705"/>
    </location>
</feature>
<feature type="domain" description="GIY-YIG" evidence="1">
    <location>
        <begin position="4"/>
        <end position="90"/>
    </location>
</feature>
<feature type="zinc finger region" description="SLX1-type" evidence="1">
    <location>
        <begin position="446"/>
        <end position="526"/>
    </location>
</feature>
<feature type="region of interest" description="Disordered" evidence="2">
    <location>
        <begin position="155"/>
        <end position="192"/>
    </location>
</feature>
<feature type="region of interest" description="Disordered" evidence="2">
    <location>
        <begin position="290"/>
        <end position="323"/>
    </location>
</feature>
<feature type="region of interest" description="Disordered" evidence="2">
    <location>
        <begin position="595"/>
        <end position="628"/>
    </location>
</feature>
<feature type="compositionally biased region" description="Polar residues" evidence="2">
    <location>
        <begin position="160"/>
        <end position="175"/>
    </location>
</feature>
<feature type="compositionally biased region" description="Polar residues" evidence="2">
    <location>
        <begin position="310"/>
        <end position="320"/>
    </location>
</feature>
<feature type="compositionally biased region" description="Low complexity" evidence="2">
    <location>
        <begin position="595"/>
        <end position="604"/>
    </location>
</feature>
<keyword id="KW-0227">DNA damage</keyword>
<keyword id="KW-0233">DNA recombination</keyword>
<keyword id="KW-0234">DNA repair</keyword>
<keyword id="KW-0255">Endonuclease</keyword>
<keyword id="KW-0378">Hydrolase</keyword>
<keyword id="KW-0479">Metal-binding</keyword>
<keyword id="KW-0540">Nuclease</keyword>
<keyword id="KW-0539">Nucleus</keyword>
<keyword id="KW-1185">Reference proteome</keyword>
<keyword id="KW-0862">Zinc</keyword>
<keyword id="KW-0863">Zinc-finger</keyword>
<name>SLX1_LEIIN</name>
<gene>
    <name type="ORF">LinJ25.1380</name>
    <name type="ORF">LinJ_25_1370</name>
</gene>
<evidence type="ECO:0000255" key="1">
    <source>
        <dbReference type="HAMAP-Rule" id="MF_03100"/>
    </source>
</evidence>
<evidence type="ECO:0000256" key="2">
    <source>
        <dbReference type="SAM" id="MobiDB-lite"/>
    </source>
</evidence>
<organism>
    <name type="scientific">Leishmania infantum</name>
    <dbReference type="NCBI Taxonomy" id="5671"/>
    <lineage>
        <taxon>Eukaryota</taxon>
        <taxon>Discoba</taxon>
        <taxon>Euglenozoa</taxon>
        <taxon>Kinetoplastea</taxon>
        <taxon>Metakinetoplastina</taxon>
        <taxon>Trypanosomatida</taxon>
        <taxon>Trypanosomatidae</taxon>
        <taxon>Leishmaniinae</taxon>
        <taxon>Leishmania</taxon>
    </lineage>
</organism>
<sequence>MDTRFHCVYLLTSLDPQCEGDFYIGYTVNPLRRLRQHNGELVNGARRTSRRGRPWTIVCCVSGFPDDRAALKFEWCWQHPTASARLRHAIDILTGLRRLPYAVATLHLLVRASLFCRLDLTLHIFESALLQEAAARAEVLLARRRGAFAVGGGLRASSPRVGTQQHSQRSSSLQGQADGVATPPLPALDSKGELQDASTAAALATTTAASHLLPPLTPSLLFHVEDTTRQAFEDAYLSHDRCLLLPSVGMGVDVGEAGKEGSHMSASAGTSCPYDVSLLSQAARAEWSNASFASDSDDEDTRRFAPYCPSTGSRTPSPQRVHTAASPALLGYRSEERAGDGVLEASPGSSIGCGAALRSFSSPPPPRASSPRSASCPPLYTGINASASLAVDAPHGGVTDACTSSPAAAPAPQPRIPLRFADYGEVDFARAHAEEQHRLHHGLLPCSLCTLPLQPSCVAYCSRAPFCTLRCHLSCLAMWMLYAEAEAAATVDGTDKSPALLSQAPPAPISPLRRLIPSQPCPCPLCGVLLHWGSLVKELKKRVVVERRLHAAQRRIRMEQRWQARLAHIDHTKRSTSAAMRRRQRTRVGAAALAKGAGEAPGAASTVRASTMHVGPARRDAPRVSSPSCLGEPTLTSFAAAASCPSPSTSLAALSPAASASPISRHNGHSNTVTATNTAVAAAAAVSDASLLSLTDFCEEDWLLP</sequence>
<proteinExistence type="inferred from homology"/>
<comment type="function">
    <text evidence="1">Catalytic subunit of a heterodimeric structure-specific endonuclease that resolves DNA secondary structures generated during DNA repair and recombination. Has endonuclease activity towards branched DNA substrates, introducing single-strand cuts in duplex DNA close to junctions with ss-DNA.</text>
</comment>
<comment type="cofactor">
    <cofactor evidence="1">
        <name>a divalent metal cation</name>
        <dbReference type="ChEBI" id="CHEBI:60240"/>
    </cofactor>
</comment>
<comment type="subunit">
    <text evidence="1">Forms a heterodimer with a member of the SLX4 family.</text>
</comment>
<comment type="subcellular location">
    <subcellularLocation>
        <location evidence="1">Nucleus</location>
    </subcellularLocation>
</comment>
<comment type="similarity">
    <text evidence="1">Belongs to the SLX1 family.</text>
</comment>
<protein>
    <recommendedName>
        <fullName evidence="1">Structure-specific endonuclease subunit SLX1 homolog</fullName>
        <ecNumber evidence="1">3.1.-.-</ecNumber>
    </recommendedName>
</protein>
<dbReference type="EC" id="3.1.-.-" evidence="1"/>
<dbReference type="EMBL" id="FR796457">
    <property type="protein sequence ID" value="CAM68607.1"/>
    <property type="molecule type" value="Genomic_DNA"/>
</dbReference>
<dbReference type="RefSeq" id="XP_001466168.1">
    <property type="nucleotide sequence ID" value="XM_001466131.1"/>
</dbReference>
<dbReference type="SMR" id="A4I1H7"/>
<dbReference type="STRING" id="5671.A4I1H7"/>
<dbReference type="GeneID" id="5069603"/>
<dbReference type="KEGG" id="lif:LINJ_25_1370"/>
<dbReference type="VEuPathDB" id="TriTrypDB:LINF_250019500"/>
<dbReference type="eggNOG" id="KOG3005">
    <property type="taxonomic scope" value="Eukaryota"/>
</dbReference>
<dbReference type="InParanoid" id="A4I1H7"/>
<dbReference type="OMA" id="PWTIVCC"/>
<dbReference type="Proteomes" id="UP000008153">
    <property type="component" value="Chromosome 25"/>
</dbReference>
<dbReference type="GO" id="GO:0033557">
    <property type="term" value="C:Slx1-Slx4 complex"/>
    <property type="evidence" value="ECO:0007669"/>
    <property type="project" value="UniProtKB-UniRule"/>
</dbReference>
<dbReference type="GO" id="GO:0017108">
    <property type="term" value="F:5'-flap endonuclease activity"/>
    <property type="evidence" value="ECO:0007669"/>
    <property type="project" value="InterPro"/>
</dbReference>
<dbReference type="GO" id="GO:0008270">
    <property type="term" value="F:zinc ion binding"/>
    <property type="evidence" value="ECO:0007669"/>
    <property type="project" value="UniProtKB-KW"/>
</dbReference>
<dbReference type="GO" id="GO:0006310">
    <property type="term" value="P:DNA recombination"/>
    <property type="evidence" value="ECO:0007669"/>
    <property type="project" value="UniProtKB-UniRule"/>
</dbReference>
<dbReference type="GO" id="GO:0006281">
    <property type="term" value="P:DNA repair"/>
    <property type="evidence" value="ECO:0007669"/>
    <property type="project" value="UniProtKB-UniRule"/>
</dbReference>
<dbReference type="CDD" id="cd10455">
    <property type="entry name" value="GIY-YIG_SLX1"/>
    <property type="match status" value="1"/>
</dbReference>
<dbReference type="Gene3D" id="3.40.1440.10">
    <property type="entry name" value="GIY-YIG endonuclease"/>
    <property type="match status" value="1"/>
</dbReference>
<dbReference type="Gene3D" id="3.30.40.10">
    <property type="entry name" value="Zinc/RING finger domain, C3HC4 (zinc finger)"/>
    <property type="match status" value="1"/>
</dbReference>
<dbReference type="HAMAP" id="MF_03100">
    <property type="entry name" value="Endonuc_su_Slx1"/>
    <property type="match status" value="1"/>
</dbReference>
<dbReference type="InterPro" id="IPR000305">
    <property type="entry name" value="GIY-YIG_endonuc"/>
</dbReference>
<dbReference type="InterPro" id="IPR035901">
    <property type="entry name" value="GIY-YIG_endonuc_sf"/>
</dbReference>
<dbReference type="InterPro" id="IPR027520">
    <property type="entry name" value="Slx1"/>
</dbReference>
<dbReference type="InterPro" id="IPR050381">
    <property type="entry name" value="SLX1_endonuclease"/>
</dbReference>
<dbReference type="InterPro" id="IPR013083">
    <property type="entry name" value="Znf_RING/FYVE/PHD"/>
</dbReference>
<dbReference type="PANTHER" id="PTHR20208">
    <property type="entry name" value="STRUCTURE-SPECIFIC ENDONUCLEASE SUBUNIT SLX1"/>
    <property type="match status" value="1"/>
</dbReference>
<dbReference type="PANTHER" id="PTHR20208:SF13">
    <property type="entry name" value="STRUCTURE-SPECIFIC ENDONUCLEASE SUBUNIT SLX1"/>
    <property type="match status" value="1"/>
</dbReference>
<dbReference type="Pfam" id="PF01541">
    <property type="entry name" value="GIY-YIG"/>
    <property type="match status" value="1"/>
</dbReference>
<dbReference type="PROSITE" id="PS50164">
    <property type="entry name" value="GIY_YIG"/>
    <property type="match status" value="1"/>
</dbReference>